<sequence>MSEQEKDQNNAEPQVETVEEQQAAAAAEAVEPTAEEKLAEVEVELAKVKKALAEADVRAQAEVQNVRKRAERDVQHARKFALEKFAGDLLSVADNLERGLAALDAEDDALKGAREGIELTLKSLLDAFARYNIEQINPADEPFNPELHEAMTMVPVPNVDPNSVIEVLEKGYQLNGRLIRPARVVVSKAP</sequence>
<comment type="function">
    <text evidence="1">Participates actively in the response to hyperosmotic and heat shock by preventing the aggregation of stress-denatured proteins, in association with DnaK and GrpE. It is the nucleotide exchange factor for DnaK and may function as a thermosensor. Unfolded proteins bind initially to DnaJ; upon interaction with the DnaJ-bound protein, DnaK hydrolyzes its bound ATP, resulting in the formation of a stable complex. GrpE releases ADP from DnaK; ATP binding to DnaK triggers the release of the substrate protein, thus completing the reaction cycle. Several rounds of ATP-dependent interactions between DnaJ, DnaK and GrpE are required for fully efficient folding.</text>
</comment>
<comment type="subunit">
    <text evidence="1">Homodimer.</text>
</comment>
<comment type="subcellular location">
    <subcellularLocation>
        <location evidence="1">Cytoplasm</location>
    </subcellularLocation>
</comment>
<comment type="similarity">
    <text evidence="1">Belongs to the GrpE family.</text>
</comment>
<reference key="1">
    <citation type="journal article" date="2006" name="Nat. Biotechnol.">
        <title>Genome sequence of the ubiquitous hydrocarbon-degrading marine bacterium Alcanivorax borkumensis.</title>
        <authorList>
            <person name="Schneiker S."/>
            <person name="Martins dos Santos V.A.P."/>
            <person name="Bartels D."/>
            <person name="Bekel T."/>
            <person name="Brecht M."/>
            <person name="Buhrmester J."/>
            <person name="Chernikova T.N."/>
            <person name="Denaro R."/>
            <person name="Ferrer M."/>
            <person name="Gertler C."/>
            <person name="Goesmann A."/>
            <person name="Golyshina O.V."/>
            <person name="Kaminski F."/>
            <person name="Khachane A.N."/>
            <person name="Lang S."/>
            <person name="Linke B."/>
            <person name="McHardy A.C."/>
            <person name="Meyer F."/>
            <person name="Nechitaylo T."/>
            <person name="Puehler A."/>
            <person name="Regenhardt D."/>
            <person name="Rupp O."/>
            <person name="Sabirova J.S."/>
            <person name="Selbitschka W."/>
            <person name="Yakimov M.M."/>
            <person name="Timmis K.N."/>
            <person name="Vorhoelter F.-J."/>
            <person name="Weidner S."/>
            <person name="Kaiser O."/>
            <person name="Golyshin P.N."/>
        </authorList>
    </citation>
    <scope>NUCLEOTIDE SEQUENCE [LARGE SCALE GENOMIC DNA]</scope>
    <source>
        <strain>ATCC 700651 / DSM 11573 / NCIMB 13689 / SK2</strain>
    </source>
</reference>
<accession>Q0VST7</accession>
<gene>
    <name evidence="1" type="primary">grpE</name>
    <name type="ordered locus">ABO_0313</name>
</gene>
<dbReference type="EMBL" id="AM286690">
    <property type="protein sequence ID" value="CAL15761.1"/>
    <property type="molecule type" value="Genomic_DNA"/>
</dbReference>
<dbReference type="RefSeq" id="WP_011587609.1">
    <property type="nucleotide sequence ID" value="NC_008260.1"/>
</dbReference>
<dbReference type="SMR" id="Q0VST7"/>
<dbReference type="STRING" id="393595.ABO_0313"/>
<dbReference type="KEGG" id="abo:ABO_0313"/>
<dbReference type="eggNOG" id="COG0576">
    <property type="taxonomic scope" value="Bacteria"/>
</dbReference>
<dbReference type="HOGENOM" id="CLU_057217_6_0_6"/>
<dbReference type="OrthoDB" id="9789811at2"/>
<dbReference type="Proteomes" id="UP000008871">
    <property type="component" value="Chromosome"/>
</dbReference>
<dbReference type="GO" id="GO:0005829">
    <property type="term" value="C:cytosol"/>
    <property type="evidence" value="ECO:0007669"/>
    <property type="project" value="TreeGrafter"/>
</dbReference>
<dbReference type="GO" id="GO:0000774">
    <property type="term" value="F:adenyl-nucleotide exchange factor activity"/>
    <property type="evidence" value="ECO:0007669"/>
    <property type="project" value="InterPro"/>
</dbReference>
<dbReference type="GO" id="GO:0042803">
    <property type="term" value="F:protein homodimerization activity"/>
    <property type="evidence" value="ECO:0007669"/>
    <property type="project" value="InterPro"/>
</dbReference>
<dbReference type="GO" id="GO:0051087">
    <property type="term" value="F:protein-folding chaperone binding"/>
    <property type="evidence" value="ECO:0007669"/>
    <property type="project" value="InterPro"/>
</dbReference>
<dbReference type="GO" id="GO:0051082">
    <property type="term" value="F:unfolded protein binding"/>
    <property type="evidence" value="ECO:0007669"/>
    <property type="project" value="TreeGrafter"/>
</dbReference>
<dbReference type="GO" id="GO:0006457">
    <property type="term" value="P:protein folding"/>
    <property type="evidence" value="ECO:0007669"/>
    <property type="project" value="InterPro"/>
</dbReference>
<dbReference type="CDD" id="cd00446">
    <property type="entry name" value="GrpE"/>
    <property type="match status" value="1"/>
</dbReference>
<dbReference type="FunFam" id="2.30.22.10:FF:000001">
    <property type="entry name" value="Protein GrpE"/>
    <property type="match status" value="1"/>
</dbReference>
<dbReference type="Gene3D" id="3.90.20.20">
    <property type="match status" value="1"/>
</dbReference>
<dbReference type="Gene3D" id="2.30.22.10">
    <property type="entry name" value="Head domain of nucleotide exchange factor GrpE"/>
    <property type="match status" value="1"/>
</dbReference>
<dbReference type="HAMAP" id="MF_01151">
    <property type="entry name" value="GrpE"/>
    <property type="match status" value="1"/>
</dbReference>
<dbReference type="InterPro" id="IPR000740">
    <property type="entry name" value="GrpE"/>
</dbReference>
<dbReference type="InterPro" id="IPR013805">
    <property type="entry name" value="GrpE_coiled_coil"/>
</dbReference>
<dbReference type="InterPro" id="IPR009012">
    <property type="entry name" value="GrpE_head"/>
</dbReference>
<dbReference type="NCBIfam" id="NF010748">
    <property type="entry name" value="PRK14150.1"/>
    <property type="match status" value="1"/>
</dbReference>
<dbReference type="PANTHER" id="PTHR21237">
    <property type="entry name" value="GRPE PROTEIN"/>
    <property type="match status" value="1"/>
</dbReference>
<dbReference type="PANTHER" id="PTHR21237:SF23">
    <property type="entry name" value="GRPE PROTEIN HOMOLOG, MITOCHONDRIAL"/>
    <property type="match status" value="1"/>
</dbReference>
<dbReference type="Pfam" id="PF01025">
    <property type="entry name" value="GrpE"/>
    <property type="match status" value="1"/>
</dbReference>
<dbReference type="PRINTS" id="PR00773">
    <property type="entry name" value="GRPEPROTEIN"/>
</dbReference>
<dbReference type="SUPFAM" id="SSF58014">
    <property type="entry name" value="Coiled-coil domain of nucleotide exchange factor GrpE"/>
    <property type="match status" value="1"/>
</dbReference>
<dbReference type="SUPFAM" id="SSF51064">
    <property type="entry name" value="Head domain of nucleotide exchange factor GrpE"/>
    <property type="match status" value="1"/>
</dbReference>
<dbReference type="PROSITE" id="PS01071">
    <property type="entry name" value="GRPE"/>
    <property type="match status" value="1"/>
</dbReference>
<feature type="chain" id="PRO_1000085104" description="Protein GrpE">
    <location>
        <begin position="1"/>
        <end position="190"/>
    </location>
</feature>
<feature type="region of interest" description="Disordered" evidence="2">
    <location>
        <begin position="1"/>
        <end position="33"/>
    </location>
</feature>
<feature type="compositionally biased region" description="Low complexity" evidence="2">
    <location>
        <begin position="11"/>
        <end position="32"/>
    </location>
</feature>
<evidence type="ECO:0000255" key="1">
    <source>
        <dbReference type="HAMAP-Rule" id="MF_01151"/>
    </source>
</evidence>
<evidence type="ECO:0000256" key="2">
    <source>
        <dbReference type="SAM" id="MobiDB-lite"/>
    </source>
</evidence>
<keyword id="KW-0143">Chaperone</keyword>
<keyword id="KW-0963">Cytoplasm</keyword>
<keyword id="KW-1185">Reference proteome</keyword>
<keyword id="KW-0346">Stress response</keyword>
<organism>
    <name type="scientific">Alcanivorax borkumensis (strain ATCC 700651 / DSM 11573 / NCIMB 13689 / SK2)</name>
    <dbReference type="NCBI Taxonomy" id="393595"/>
    <lineage>
        <taxon>Bacteria</taxon>
        <taxon>Pseudomonadati</taxon>
        <taxon>Pseudomonadota</taxon>
        <taxon>Gammaproteobacteria</taxon>
        <taxon>Oceanospirillales</taxon>
        <taxon>Alcanivoracaceae</taxon>
        <taxon>Alcanivorax</taxon>
    </lineage>
</organism>
<name>GRPE_ALCBS</name>
<proteinExistence type="inferred from homology"/>
<protein>
    <recommendedName>
        <fullName evidence="1">Protein GrpE</fullName>
    </recommendedName>
    <alternativeName>
        <fullName evidence="1">HSP-70 cofactor</fullName>
    </alternativeName>
</protein>